<protein>
    <recommendedName>
        <fullName>Transmembrane protein 214</fullName>
    </recommendedName>
</protein>
<gene>
    <name type="primary">Tmem214</name>
</gene>
<organism>
    <name type="scientific">Rattus norvegicus</name>
    <name type="common">Rat</name>
    <dbReference type="NCBI Taxonomy" id="10116"/>
    <lineage>
        <taxon>Eukaryota</taxon>
        <taxon>Metazoa</taxon>
        <taxon>Chordata</taxon>
        <taxon>Craniata</taxon>
        <taxon>Vertebrata</taxon>
        <taxon>Euteleostomi</taxon>
        <taxon>Mammalia</taxon>
        <taxon>Eutheria</taxon>
        <taxon>Euarchontoglires</taxon>
        <taxon>Glires</taxon>
        <taxon>Rodentia</taxon>
        <taxon>Myomorpha</taxon>
        <taxon>Muroidea</taxon>
        <taxon>Muridae</taxon>
        <taxon>Murinae</taxon>
        <taxon>Rattus</taxon>
    </lineage>
</organism>
<comment type="function">
    <text evidence="1">Critical mediator, in cooperation with CASP4, of endoplasmic reticulum-stress induced apoptosis. Required or the activation of CASP4 following endoplasmic reticulum stress (By similarity).</text>
</comment>
<comment type="subunit">
    <text evidence="1">Constitutively interacts with CASP4; required for the localization of procaspase 4 to the ER.</text>
</comment>
<comment type="subcellular location">
    <subcellularLocation>
        <location evidence="1">Endoplasmic reticulum membrane</location>
        <topology evidence="1">Multi-pass membrane protein</topology>
    </subcellularLocation>
</comment>
<comment type="similarity">
    <text evidence="5">Belongs to the TMEM214 family.</text>
</comment>
<comment type="sequence caution" evidence="5">
    <conflict type="frameshift">
        <sequence resource="EMBL-CDS" id="AAH85114"/>
    </conflict>
</comment>
<dbReference type="EMBL" id="BC085114">
    <property type="protein sequence ID" value="AAH85114.1"/>
    <property type="status" value="ALT_FRAME"/>
    <property type="molecule type" value="mRNA"/>
</dbReference>
<dbReference type="EMBL" id="BC129115">
    <property type="protein sequence ID" value="AAI29116.1"/>
    <property type="molecule type" value="mRNA"/>
</dbReference>
<dbReference type="RefSeq" id="NP_001014217.2">
    <property type="nucleotide sequence ID" value="NM_001014195.2"/>
</dbReference>
<dbReference type="RefSeq" id="XP_063118130.1">
    <property type="nucleotide sequence ID" value="XM_063262060.1"/>
</dbReference>
<dbReference type="FunCoup" id="A1L1L2">
    <property type="interactions" value="3516"/>
</dbReference>
<dbReference type="STRING" id="10116.ENSRNOP00000011838"/>
<dbReference type="GlyCosmos" id="A1L1L2">
    <property type="glycosylation" value="2 sites, No reported glycans"/>
</dbReference>
<dbReference type="GlyGen" id="A1L1L2">
    <property type="glycosylation" value="2 sites"/>
</dbReference>
<dbReference type="PhosphoSitePlus" id="A1L1L2"/>
<dbReference type="PaxDb" id="10116-ENSRNOP00000011838"/>
<dbReference type="PeptideAtlas" id="A1L1L2"/>
<dbReference type="Ensembl" id="ENSRNOT00000011838.7">
    <property type="protein sequence ID" value="ENSRNOP00000011838.5"/>
    <property type="gene ID" value="ENSRNOG00000008812.7"/>
</dbReference>
<dbReference type="GeneID" id="362711"/>
<dbReference type="KEGG" id="rno:362711"/>
<dbReference type="AGR" id="RGD:1311324"/>
<dbReference type="CTD" id="54867"/>
<dbReference type="RGD" id="1311324">
    <property type="gene designation" value="Tmem214"/>
</dbReference>
<dbReference type="eggNOG" id="KOG4467">
    <property type="taxonomic scope" value="Eukaryota"/>
</dbReference>
<dbReference type="GeneTree" id="ENSGT00390000002693"/>
<dbReference type="HOGENOM" id="CLU_025330_1_0_1"/>
<dbReference type="InParanoid" id="A1L1L2"/>
<dbReference type="OMA" id="NGSAGKW"/>
<dbReference type="OrthoDB" id="10022292at2759"/>
<dbReference type="PhylomeDB" id="A1L1L2"/>
<dbReference type="TreeFam" id="TF329489"/>
<dbReference type="PRO" id="PR:A1L1L2"/>
<dbReference type="Proteomes" id="UP000002494">
    <property type="component" value="Chromosome 6"/>
</dbReference>
<dbReference type="Bgee" id="ENSRNOG00000008812">
    <property type="expression patterns" value="Expressed in testis and 19 other cell types or tissues"/>
</dbReference>
<dbReference type="GO" id="GO:0005881">
    <property type="term" value="C:cytoplasmic microtubule"/>
    <property type="evidence" value="ECO:0000250"/>
    <property type="project" value="UniProtKB"/>
</dbReference>
<dbReference type="GO" id="GO:0005829">
    <property type="term" value="C:cytosol"/>
    <property type="evidence" value="ECO:0007669"/>
    <property type="project" value="Ensembl"/>
</dbReference>
<dbReference type="GO" id="GO:0005783">
    <property type="term" value="C:endoplasmic reticulum"/>
    <property type="evidence" value="ECO:0000318"/>
    <property type="project" value="GO_Central"/>
</dbReference>
<dbReference type="GO" id="GO:0005789">
    <property type="term" value="C:endoplasmic reticulum membrane"/>
    <property type="evidence" value="ECO:0007669"/>
    <property type="project" value="UniProtKB-SubCell"/>
</dbReference>
<dbReference type="GO" id="GO:0005794">
    <property type="term" value="C:Golgi apparatus"/>
    <property type="evidence" value="ECO:0000318"/>
    <property type="project" value="GO_Central"/>
</dbReference>
<dbReference type="GO" id="GO:0006915">
    <property type="term" value="P:apoptotic process"/>
    <property type="evidence" value="ECO:0007669"/>
    <property type="project" value="UniProtKB-KW"/>
</dbReference>
<dbReference type="InterPro" id="IPR019308">
    <property type="entry name" value="TMEM214"/>
</dbReference>
<dbReference type="PANTHER" id="PTHR13448">
    <property type="entry name" value="TRANSMEMBRANE PROTEIN 214"/>
    <property type="match status" value="1"/>
</dbReference>
<dbReference type="PANTHER" id="PTHR13448:SF0">
    <property type="entry name" value="TRANSMEMBRANE PROTEIN 214"/>
    <property type="match status" value="1"/>
</dbReference>
<dbReference type="Pfam" id="PF10151">
    <property type="entry name" value="TMEM214"/>
    <property type="match status" value="1"/>
</dbReference>
<sequence length="685" mass="76566">MAARAAGSGGWEVVKRSRRPGASSGGRGGGGDRRALGEANGVWKYDLSSPIQPTSTLYERGFEKIMKRQNKEQVPPPAAESKKPVNKKQPKKVTAVASQNQKQGPFRSLEDALKALDVAALQKELDKSQSVFTGNPSVWLKDLASYLNYKLQTPRMEPTLSQYPHDYPYSLVSRELRGIIRGLLTKAAGSVELFFDHCLFTMLQELDKTPGESLHGYRICIQAILQDKPKIVTSNLDKFLELLRSHQSRPAKCLTIMWALGQAGFTNLTEGLKVWLGIMLPVLGIKSLSPFAIAYLDRLLLMYPNLTKGFGMIGPKDFFPLLDFAYMPNNSLSPSLQEQLCQLFPRLKVLAFGAKPESSLHTYFPSFLSRATPSCPAAMKKELLASLTQCLTVDPLSTSVWRQLYPKHLSQSSLLLEHLLTSWEQIPKKARKCLQETIQSFTLTNQELLKKGSGSNEHVVTCDTACKGLLQQARGPRPPWARLLLLLLVFAVGFLCHDLRSHSSFQASLTGRLLQSSGLLPVAQQVCAKLYSYSLQSYNWLQETLPACGSYLLAVVQPSLQLAWTYIYATFSFLSAYCASYLAFFSDSLAGVLQRVQLPEALHQLFHSLKELLLLFYHSVLLPMWHLLLAALAQVQEHCHEACRGEMTWDCIKTQFSTAAHWTWLCLQDVTVAFLDWALTMISQQ</sequence>
<evidence type="ECO:0000250" key="1"/>
<evidence type="ECO:0000250" key="2">
    <source>
        <dbReference type="UniProtKB" id="Q6NUQ4"/>
    </source>
</evidence>
<evidence type="ECO:0000255" key="3"/>
<evidence type="ECO:0000256" key="4">
    <source>
        <dbReference type="SAM" id="MobiDB-lite"/>
    </source>
</evidence>
<evidence type="ECO:0000305" key="5"/>
<proteinExistence type="evidence at transcript level"/>
<reference key="1">
    <citation type="journal article" date="2004" name="Genome Res.">
        <title>The status, quality, and expansion of the NIH full-length cDNA project: the Mammalian Gene Collection (MGC).</title>
        <authorList>
            <consortium name="The MGC Project Team"/>
        </authorList>
    </citation>
    <scope>NUCLEOTIDE SEQUENCE [LARGE SCALE MRNA]</scope>
    <source>
        <tissue>Kidney</tissue>
        <tissue>Testis</tissue>
    </source>
</reference>
<feature type="initiator methionine" description="Removed" evidence="2">
    <location>
        <position position="1"/>
    </location>
</feature>
<feature type="chain" id="PRO_0000321899" description="Transmembrane protein 214">
    <location>
        <begin position="2"/>
        <end position="685"/>
    </location>
</feature>
<feature type="transmembrane region" description="Helical" evidence="3">
    <location>
        <begin position="479"/>
        <end position="499"/>
    </location>
</feature>
<feature type="transmembrane region" description="Helical" evidence="3">
    <location>
        <begin position="612"/>
        <end position="632"/>
    </location>
</feature>
<feature type="region of interest" description="Disordered" evidence="4">
    <location>
        <begin position="1"/>
        <end position="36"/>
    </location>
</feature>
<feature type="region of interest" description="Disordered" evidence="4">
    <location>
        <begin position="66"/>
        <end position="104"/>
    </location>
</feature>
<feature type="modified residue" description="N-acetylalanine" evidence="2">
    <location>
        <position position="2"/>
    </location>
</feature>
<feature type="glycosylation site" description="N-linked (GlcNAc...) asparagine" evidence="3">
    <location>
        <position position="267"/>
    </location>
</feature>
<feature type="glycosylation site" description="N-linked (GlcNAc...) asparagine" evidence="3">
    <location>
        <position position="305"/>
    </location>
</feature>
<accession>A1L1L2</accession>
<accession>Q5U4F5</accession>
<name>TM214_RAT</name>
<keyword id="KW-0007">Acetylation</keyword>
<keyword id="KW-0053">Apoptosis</keyword>
<keyword id="KW-0256">Endoplasmic reticulum</keyword>
<keyword id="KW-0325">Glycoprotein</keyword>
<keyword id="KW-0472">Membrane</keyword>
<keyword id="KW-1185">Reference proteome</keyword>
<keyword id="KW-0812">Transmembrane</keyword>
<keyword id="KW-1133">Transmembrane helix</keyword>